<protein>
    <recommendedName>
        <fullName evidence="1">Ion-translocating oxidoreductase complex subunit E</fullName>
        <ecNumber evidence="1">7.-.-.-</ecNumber>
    </recommendedName>
    <alternativeName>
        <fullName evidence="1">Rnf electron transport complex subunit E</fullName>
    </alternativeName>
</protein>
<organism>
    <name type="scientific">Shewanella denitrificans (strain OS217 / ATCC BAA-1090 / DSM 15013)</name>
    <dbReference type="NCBI Taxonomy" id="318161"/>
    <lineage>
        <taxon>Bacteria</taxon>
        <taxon>Pseudomonadati</taxon>
        <taxon>Pseudomonadota</taxon>
        <taxon>Gammaproteobacteria</taxon>
        <taxon>Alteromonadales</taxon>
        <taxon>Shewanellaceae</taxon>
        <taxon>Shewanella</taxon>
    </lineage>
</organism>
<evidence type="ECO:0000255" key="1">
    <source>
        <dbReference type="HAMAP-Rule" id="MF_00478"/>
    </source>
</evidence>
<name>RNFE_SHEDO</name>
<proteinExistence type="inferred from homology"/>
<keyword id="KW-0997">Cell inner membrane</keyword>
<keyword id="KW-1003">Cell membrane</keyword>
<keyword id="KW-0249">Electron transport</keyword>
<keyword id="KW-0472">Membrane</keyword>
<keyword id="KW-1185">Reference proteome</keyword>
<keyword id="KW-1278">Translocase</keyword>
<keyword id="KW-0812">Transmembrane</keyword>
<keyword id="KW-1133">Transmembrane helix</keyword>
<keyword id="KW-0813">Transport</keyword>
<comment type="function">
    <text evidence="1">Part of a membrane-bound complex that couples electron transfer with translocation of ions across the membrane.</text>
</comment>
<comment type="subunit">
    <text evidence="1">The complex is composed of six subunits: RnfA, RnfB, RnfC, RnfD, RnfE and RnfG.</text>
</comment>
<comment type="subcellular location">
    <subcellularLocation>
        <location evidence="1">Cell inner membrane</location>
        <topology evidence="1">Multi-pass membrane protein</topology>
    </subcellularLocation>
</comment>
<comment type="similarity">
    <text evidence="1">Belongs to the NqrDE/RnfAE family.</text>
</comment>
<dbReference type="EC" id="7.-.-.-" evidence="1"/>
<dbReference type="EMBL" id="CP000302">
    <property type="protein sequence ID" value="ABE55151.1"/>
    <property type="molecule type" value="Genomic_DNA"/>
</dbReference>
<dbReference type="RefSeq" id="WP_011496308.1">
    <property type="nucleotide sequence ID" value="NC_007954.1"/>
</dbReference>
<dbReference type="SMR" id="Q12N25"/>
<dbReference type="STRING" id="318161.Sden_1868"/>
<dbReference type="KEGG" id="sdn:Sden_1868"/>
<dbReference type="eggNOG" id="COG4660">
    <property type="taxonomic scope" value="Bacteria"/>
</dbReference>
<dbReference type="HOGENOM" id="CLU_046659_1_0_6"/>
<dbReference type="OrthoDB" id="9782945at2"/>
<dbReference type="Proteomes" id="UP000001982">
    <property type="component" value="Chromosome"/>
</dbReference>
<dbReference type="GO" id="GO:0005886">
    <property type="term" value="C:plasma membrane"/>
    <property type="evidence" value="ECO:0007669"/>
    <property type="project" value="UniProtKB-SubCell"/>
</dbReference>
<dbReference type="GO" id="GO:0022900">
    <property type="term" value="P:electron transport chain"/>
    <property type="evidence" value="ECO:0007669"/>
    <property type="project" value="UniProtKB-UniRule"/>
</dbReference>
<dbReference type="HAMAP" id="MF_00478">
    <property type="entry name" value="RsxE_RnfE"/>
    <property type="match status" value="1"/>
</dbReference>
<dbReference type="InterPro" id="IPR003667">
    <property type="entry name" value="NqrDE/RnfAE"/>
</dbReference>
<dbReference type="InterPro" id="IPR010968">
    <property type="entry name" value="RnfE"/>
</dbReference>
<dbReference type="NCBIfam" id="NF009070">
    <property type="entry name" value="PRK12405.1"/>
    <property type="match status" value="1"/>
</dbReference>
<dbReference type="NCBIfam" id="TIGR01948">
    <property type="entry name" value="rnfE"/>
    <property type="match status" value="1"/>
</dbReference>
<dbReference type="PANTHER" id="PTHR30586">
    <property type="entry name" value="ELECTRON TRANSPORT COMPLEX PROTEIN RNFE"/>
    <property type="match status" value="1"/>
</dbReference>
<dbReference type="PANTHER" id="PTHR30586:SF0">
    <property type="entry name" value="ION-TRANSLOCATING OXIDOREDUCTASE COMPLEX SUBUNIT E"/>
    <property type="match status" value="1"/>
</dbReference>
<dbReference type="Pfam" id="PF02508">
    <property type="entry name" value="Rnf-Nqr"/>
    <property type="match status" value="1"/>
</dbReference>
<dbReference type="PIRSF" id="PIRSF006102">
    <property type="entry name" value="NQR_DE"/>
    <property type="match status" value="1"/>
</dbReference>
<accession>Q12N25</accession>
<gene>
    <name evidence="1" type="primary">rnfE</name>
    <name type="ordered locus">Sden_1868</name>
</gene>
<sequence>MSQYQEIAKQGLWHNNPGLVQLLGLCPLLAVTATVTNALGLGFATLLVLVGSNMLVSLVRDYVPKEIRIPVFVMIIAALVTSVQLLINAYAYGLYLSLGIFLPLIVTNCVIIGRAEAFASRNNLAHSAFDGLMMGIGFTCVLVVLGAGRELLGQGTLFEGADLLLGDWAKALVMQVWQVDTPFLLALLPPGAFIGMGLLIAGKNVIDARLKARQPKTQAEPVARVRITKVS</sequence>
<feature type="chain" id="PRO_1000014100" description="Ion-translocating oxidoreductase complex subunit E">
    <location>
        <begin position="1"/>
        <end position="231"/>
    </location>
</feature>
<feature type="transmembrane region" description="Helical" evidence="1">
    <location>
        <begin position="18"/>
        <end position="38"/>
    </location>
</feature>
<feature type="transmembrane region" description="Helical" evidence="1">
    <location>
        <begin position="39"/>
        <end position="59"/>
    </location>
</feature>
<feature type="transmembrane region" description="Helical" evidence="1">
    <location>
        <begin position="69"/>
        <end position="89"/>
    </location>
</feature>
<feature type="transmembrane region" description="Helical" evidence="1">
    <location>
        <begin position="93"/>
        <end position="113"/>
    </location>
</feature>
<feature type="transmembrane region" description="Helical" evidence="1">
    <location>
        <begin position="128"/>
        <end position="148"/>
    </location>
</feature>
<feature type="transmembrane region" description="Helical" evidence="1">
    <location>
        <begin position="182"/>
        <end position="202"/>
    </location>
</feature>
<reference key="1">
    <citation type="submission" date="2006-03" db="EMBL/GenBank/DDBJ databases">
        <title>Complete sequence of Shewanella denitrificans OS217.</title>
        <authorList>
            <consortium name="US DOE Joint Genome Institute"/>
            <person name="Copeland A."/>
            <person name="Lucas S."/>
            <person name="Lapidus A."/>
            <person name="Barry K."/>
            <person name="Detter J.C."/>
            <person name="Glavina del Rio T."/>
            <person name="Hammon N."/>
            <person name="Israni S."/>
            <person name="Dalin E."/>
            <person name="Tice H."/>
            <person name="Pitluck S."/>
            <person name="Brettin T."/>
            <person name="Bruce D."/>
            <person name="Han C."/>
            <person name="Tapia R."/>
            <person name="Gilna P."/>
            <person name="Kiss H."/>
            <person name="Schmutz J."/>
            <person name="Larimer F."/>
            <person name="Land M."/>
            <person name="Hauser L."/>
            <person name="Kyrpides N."/>
            <person name="Lykidis A."/>
            <person name="Richardson P."/>
        </authorList>
    </citation>
    <scope>NUCLEOTIDE SEQUENCE [LARGE SCALE GENOMIC DNA]</scope>
    <source>
        <strain>OS217 / ATCC BAA-1090 / DSM 15013</strain>
    </source>
</reference>